<comment type="function">
    <text evidence="1">Participates actively in the response to hyperosmotic and heat shock by preventing the aggregation of stress-denatured proteins and by disaggregating proteins, also in an autonomous, DnaK-independent fashion. Unfolded proteins bind initially to DnaJ; upon interaction with the DnaJ-bound protein, DnaK hydrolyzes its bound ATP, resulting in the formation of a stable complex. GrpE releases ADP from DnaK; ATP binding to DnaK triggers the release of the substrate protein, thus completing the reaction cycle. Several rounds of ATP-dependent interactions between DnaJ, DnaK and GrpE are required for fully efficient folding. Also involved, together with DnaK and GrpE, in the DNA replication of plasmids through activation of initiation proteins.</text>
</comment>
<comment type="cofactor">
    <cofactor evidence="1">
        <name>Zn(2+)</name>
        <dbReference type="ChEBI" id="CHEBI:29105"/>
    </cofactor>
    <text evidence="1">Binds 2 Zn(2+) ions per monomer.</text>
</comment>
<comment type="subunit">
    <text evidence="1">Homodimer.</text>
</comment>
<comment type="subcellular location">
    <subcellularLocation>
        <location evidence="1">Cytoplasm</location>
    </subcellularLocation>
</comment>
<comment type="domain">
    <text evidence="1">The J domain is necessary and sufficient to stimulate DnaK ATPase activity. Zinc center 1 plays an important role in the autonomous, DnaK-independent chaperone activity of DnaJ. Zinc center 2 is essential for interaction with DnaK and for DnaJ activity.</text>
</comment>
<comment type="similarity">
    <text evidence="1">Belongs to the DnaJ family.</text>
</comment>
<accession>B8CKF4</accession>
<gene>
    <name evidence="1" type="primary">dnaJ</name>
    <name type="ordered locus">swp_1197</name>
</gene>
<protein>
    <recommendedName>
        <fullName evidence="1">Chaperone protein DnaJ</fullName>
    </recommendedName>
</protein>
<proteinExistence type="inferred from homology"/>
<evidence type="ECO:0000255" key="1">
    <source>
        <dbReference type="HAMAP-Rule" id="MF_01152"/>
    </source>
</evidence>
<dbReference type="EMBL" id="CP000472">
    <property type="protein sequence ID" value="ACJ27993.1"/>
    <property type="molecule type" value="Genomic_DNA"/>
</dbReference>
<dbReference type="RefSeq" id="WP_020911371.1">
    <property type="nucleotide sequence ID" value="NC_011566.1"/>
</dbReference>
<dbReference type="SMR" id="B8CKF4"/>
<dbReference type="STRING" id="225849.swp_1197"/>
<dbReference type="KEGG" id="swp:swp_1197"/>
<dbReference type="eggNOG" id="COG0484">
    <property type="taxonomic scope" value="Bacteria"/>
</dbReference>
<dbReference type="HOGENOM" id="CLU_017633_0_7_6"/>
<dbReference type="OrthoDB" id="9779889at2"/>
<dbReference type="Proteomes" id="UP000000753">
    <property type="component" value="Chromosome"/>
</dbReference>
<dbReference type="GO" id="GO:0005737">
    <property type="term" value="C:cytoplasm"/>
    <property type="evidence" value="ECO:0007669"/>
    <property type="project" value="UniProtKB-SubCell"/>
</dbReference>
<dbReference type="GO" id="GO:0005524">
    <property type="term" value="F:ATP binding"/>
    <property type="evidence" value="ECO:0007669"/>
    <property type="project" value="InterPro"/>
</dbReference>
<dbReference type="GO" id="GO:0031072">
    <property type="term" value="F:heat shock protein binding"/>
    <property type="evidence" value="ECO:0007669"/>
    <property type="project" value="InterPro"/>
</dbReference>
<dbReference type="GO" id="GO:0051082">
    <property type="term" value="F:unfolded protein binding"/>
    <property type="evidence" value="ECO:0007669"/>
    <property type="project" value="UniProtKB-UniRule"/>
</dbReference>
<dbReference type="GO" id="GO:0008270">
    <property type="term" value="F:zinc ion binding"/>
    <property type="evidence" value="ECO:0007669"/>
    <property type="project" value="UniProtKB-UniRule"/>
</dbReference>
<dbReference type="GO" id="GO:0051085">
    <property type="term" value="P:chaperone cofactor-dependent protein refolding"/>
    <property type="evidence" value="ECO:0007669"/>
    <property type="project" value="TreeGrafter"/>
</dbReference>
<dbReference type="GO" id="GO:0006260">
    <property type="term" value="P:DNA replication"/>
    <property type="evidence" value="ECO:0007669"/>
    <property type="project" value="UniProtKB-KW"/>
</dbReference>
<dbReference type="GO" id="GO:0042026">
    <property type="term" value="P:protein refolding"/>
    <property type="evidence" value="ECO:0007669"/>
    <property type="project" value="TreeGrafter"/>
</dbReference>
<dbReference type="GO" id="GO:0009408">
    <property type="term" value="P:response to heat"/>
    <property type="evidence" value="ECO:0007669"/>
    <property type="project" value="InterPro"/>
</dbReference>
<dbReference type="CDD" id="cd06257">
    <property type="entry name" value="DnaJ"/>
    <property type="match status" value="1"/>
</dbReference>
<dbReference type="CDD" id="cd10747">
    <property type="entry name" value="DnaJ_C"/>
    <property type="match status" value="1"/>
</dbReference>
<dbReference type="CDD" id="cd10719">
    <property type="entry name" value="DnaJ_zf"/>
    <property type="match status" value="1"/>
</dbReference>
<dbReference type="FunFam" id="1.10.287.110:FF:000034">
    <property type="entry name" value="Chaperone protein DnaJ"/>
    <property type="match status" value="1"/>
</dbReference>
<dbReference type="FunFam" id="2.10.230.10:FF:000002">
    <property type="entry name" value="Molecular chaperone DnaJ"/>
    <property type="match status" value="1"/>
</dbReference>
<dbReference type="FunFam" id="2.60.260.20:FF:000004">
    <property type="entry name" value="Molecular chaperone DnaJ"/>
    <property type="match status" value="1"/>
</dbReference>
<dbReference type="Gene3D" id="1.10.287.110">
    <property type="entry name" value="DnaJ domain"/>
    <property type="match status" value="1"/>
</dbReference>
<dbReference type="Gene3D" id="2.10.230.10">
    <property type="entry name" value="Heat shock protein DnaJ, cysteine-rich domain"/>
    <property type="match status" value="1"/>
</dbReference>
<dbReference type="Gene3D" id="2.60.260.20">
    <property type="entry name" value="Urease metallochaperone UreE, N-terminal domain"/>
    <property type="match status" value="2"/>
</dbReference>
<dbReference type="HAMAP" id="MF_01152">
    <property type="entry name" value="DnaJ"/>
    <property type="match status" value="1"/>
</dbReference>
<dbReference type="InterPro" id="IPR012724">
    <property type="entry name" value="DnaJ"/>
</dbReference>
<dbReference type="InterPro" id="IPR002939">
    <property type="entry name" value="DnaJ_C"/>
</dbReference>
<dbReference type="InterPro" id="IPR001623">
    <property type="entry name" value="DnaJ_domain"/>
</dbReference>
<dbReference type="InterPro" id="IPR018253">
    <property type="entry name" value="DnaJ_domain_CS"/>
</dbReference>
<dbReference type="InterPro" id="IPR008971">
    <property type="entry name" value="HSP40/DnaJ_pept-bd"/>
</dbReference>
<dbReference type="InterPro" id="IPR001305">
    <property type="entry name" value="HSP_DnaJ_Cys-rich_dom"/>
</dbReference>
<dbReference type="InterPro" id="IPR036410">
    <property type="entry name" value="HSP_DnaJ_Cys-rich_dom_sf"/>
</dbReference>
<dbReference type="InterPro" id="IPR036869">
    <property type="entry name" value="J_dom_sf"/>
</dbReference>
<dbReference type="NCBIfam" id="TIGR02349">
    <property type="entry name" value="DnaJ_bact"/>
    <property type="match status" value="1"/>
</dbReference>
<dbReference type="NCBIfam" id="NF008035">
    <property type="entry name" value="PRK10767.1"/>
    <property type="match status" value="1"/>
</dbReference>
<dbReference type="PANTHER" id="PTHR43096:SF48">
    <property type="entry name" value="CHAPERONE PROTEIN DNAJ"/>
    <property type="match status" value="1"/>
</dbReference>
<dbReference type="PANTHER" id="PTHR43096">
    <property type="entry name" value="DNAJ HOMOLOG 1, MITOCHONDRIAL-RELATED"/>
    <property type="match status" value="1"/>
</dbReference>
<dbReference type="Pfam" id="PF00226">
    <property type="entry name" value="DnaJ"/>
    <property type="match status" value="1"/>
</dbReference>
<dbReference type="Pfam" id="PF01556">
    <property type="entry name" value="DnaJ_C"/>
    <property type="match status" value="1"/>
</dbReference>
<dbReference type="Pfam" id="PF00684">
    <property type="entry name" value="DnaJ_CXXCXGXG"/>
    <property type="match status" value="1"/>
</dbReference>
<dbReference type="PRINTS" id="PR00625">
    <property type="entry name" value="JDOMAIN"/>
</dbReference>
<dbReference type="SMART" id="SM00271">
    <property type="entry name" value="DnaJ"/>
    <property type="match status" value="1"/>
</dbReference>
<dbReference type="SUPFAM" id="SSF46565">
    <property type="entry name" value="Chaperone J-domain"/>
    <property type="match status" value="1"/>
</dbReference>
<dbReference type="SUPFAM" id="SSF57938">
    <property type="entry name" value="DnaJ/Hsp40 cysteine-rich domain"/>
    <property type="match status" value="1"/>
</dbReference>
<dbReference type="SUPFAM" id="SSF49493">
    <property type="entry name" value="HSP40/DnaJ peptide-binding domain"/>
    <property type="match status" value="2"/>
</dbReference>
<dbReference type="PROSITE" id="PS00636">
    <property type="entry name" value="DNAJ_1"/>
    <property type="match status" value="1"/>
</dbReference>
<dbReference type="PROSITE" id="PS50076">
    <property type="entry name" value="DNAJ_2"/>
    <property type="match status" value="1"/>
</dbReference>
<dbReference type="PROSITE" id="PS51188">
    <property type="entry name" value="ZF_CR"/>
    <property type="match status" value="1"/>
</dbReference>
<organism>
    <name type="scientific">Shewanella piezotolerans (strain WP3 / JCM 13877)</name>
    <dbReference type="NCBI Taxonomy" id="225849"/>
    <lineage>
        <taxon>Bacteria</taxon>
        <taxon>Pseudomonadati</taxon>
        <taxon>Pseudomonadota</taxon>
        <taxon>Gammaproteobacteria</taxon>
        <taxon>Alteromonadales</taxon>
        <taxon>Shewanellaceae</taxon>
        <taxon>Shewanella</taxon>
    </lineage>
</organism>
<keyword id="KW-0143">Chaperone</keyword>
<keyword id="KW-0963">Cytoplasm</keyword>
<keyword id="KW-0235">DNA replication</keyword>
<keyword id="KW-0479">Metal-binding</keyword>
<keyword id="KW-0677">Repeat</keyword>
<keyword id="KW-0346">Stress response</keyword>
<keyword id="KW-0862">Zinc</keyword>
<keyword id="KW-0863">Zinc-finger</keyword>
<reference key="1">
    <citation type="journal article" date="2008" name="PLoS ONE">
        <title>Environmental adaptation: genomic analysis of the piezotolerant and psychrotolerant deep-sea iron reducing bacterium Shewanella piezotolerans WP3.</title>
        <authorList>
            <person name="Wang F."/>
            <person name="Wang J."/>
            <person name="Jian H."/>
            <person name="Zhang B."/>
            <person name="Li S."/>
            <person name="Wang F."/>
            <person name="Zeng X."/>
            <person name="Gao L."/>
            <person name="Bartlett D.H."/>
            <person name="Yu J."/>
            <person name="Hu S."/>
            <person name="Xiao X."/>
        </authorList>
    </citation>
    <scope>NUCLEOTIDE SEQUENCE [LARGE SCALE GENOMIC DNA]</scope>
    <source>
        <strain>WP3 / JCM 13877</strain>
    </source>
</reference>
<name>DNAJ_SHEPW</name>
<sequence length="376" mass="40863">MSKRDFYEVLGVGRDASEREVKKAYKRLAMKFHPDRNPGDKEAEASFKEVKEAYEILTDSDKKAAYDQFGHAGVDPNRGGGGHGGADFGDVFGDVFGDIFGGGRRGGGQRQAARGSDLRYNLELSLEEAVKGLSKELRIPTLVACEPCDGSGAKKGSKPTTCGTCHGQGQVQMRQGFFAVQQACPTCHGRGKIIKDPCNKCHGEGRVEKSKTLSVKIPAGVDTGDRIRLSGEGEAGEFGAPPGDLYVQVSVREHAIFQRDGNNLYCEVPISFSKAALGGEIEVPTLDGKVNLKIPTETQTGRMFRMRGKGVKSVRSHAVGDLLCKVVMETPVNLNERQKELLREFEETLTGQSKKHSPKAEGFFDGVKKFFQDLNS</sequence>
<feature type="chain" id="PRO_1000137727" description="Chaperone protein DnaJ">
    <location>
        <begin position="1"/>
        <end position="376"/>
    </location>
</feature>
<feature type="domain" description="J" evidence="1">
    <location>
        <begin position="5"/>
        <end position="70"/>
    </location>
</feature>
<feature type="repeat" description="CXXCXGXG motif">
    <location>
        <begin position="145"/>
        <end position="152"/>
    </location>
</feature>
<feature type="repeat" description="CXXCXGXG motif">
    <location>
        <begin position="162"/>
        <end position="169"/>
    </location>
</feature>
<feature type="repeat" description="CXXCXGXG motif">
    <location>
        <begin position="184"/>
        <end position="191"/>
    </location>
</feature>
<feature type="repeat" description="CXXCXGXG motif">
    <location>
        <begin position="198"/>
        <end position="205"/>
    </location>
</feature>
<feature type="zinc finger region" description="CR-type" evidence="1">
    <location>
        <begin position="132"/>
        <end position="210"/>
    </location>
</feature>
<feature type="binding site" evidence="1">
    <location>
        <position position="145"/>
    </location>
    <ligand>
        <name>Zn(2+)</name>
        <dbReference type="ChEBI" id="CHEBI:29105"/>
        <label>1</label>
    </ligand>
</feature>
<feature type="binding site" evidence="1">
    <location>
        <position position="148"/>
    </location>
    <ligand>
        <name>Zn(2+)</name>
        <dbReference type="ChEBI" id="CHEBI:29105"/>
        <label>1</label>
    </ligand>
</feature>
<feature type="binding site" evidence="1">
    <location>
        <position position="162"/>
    </location>
    <ligand>
        <name>Zn(2+)</name>
        <dbReference type="ChEBI" id="CHEBI:29105"/>
        <label>2</label>
    </ligand>
</feature>
<feature type="binding site" evidence="1">
    <location>
        <position position="165"/>
    </location>
    <ligand>
        <name>Zn(2+)</name>
        <dbReference type="ChEBI" id="CHEBI:29105"/>
        <label>2</label>
    </ligand>
</feature>
<feature type="binding site" evidence="1">
    <location>
        <position position="184"/>
    </location>
    <ligand>
        <name>Zn(2+)</name>
        <dbReference type="ChEBI" id="CHEBI:29105"/>
        <label>2</label>
    </ligand>
</feature>
<feature type="binding site" evidence="1">
    <location>
        <position position="187"/>
    </location>
    <ligand>
        <name>Zn(2+)</name>
        <dbReference type="ChEBI" id="CHEBI:29105"/>
        <label>2</label>
    </ligand>
</feature>
<feature type="binding site" evidence="1">
    <location>
        <position position="198"/>
    </location>
    <ligand>
        <name>Zn(2+)</name>
        <dbReference type="ChEBI" id="CHEBI:29105"/>
        <label>1</label>
    </ligand>
</feature>
<feature type="binding site" evidence="1">
    <location>
        <position position="201"/>
    </location>
    <ligand>
        <name>Zn(2+)</name>
        <dbReference type="ChEBI" id="CHEBI:29105"/>
        <label>1</label>
    </ligand>
</feature>